<reference key="1">
    <citation type="submission" date="2007-03" db="EMBL/GenBank/DDBJ databases">
        <title>Sequencing analysis of Aethionema grandiflorum chloroplast DNA.</title>
        <authorList>
            <person name="Hosouchi T."/>
            <person name="Tsuruoka H."/>
            <person name="Kotani H."/>
        </authorList>
    </citation>
    <scope>NUCLEOTIDE SEQUENCE [LARGE SCALE GENOMIC DNA]</scope>
</reference>
<dbReference type="EMBL" id="AP009367">
    <property type="protein sequence ID" value="BAF49892.1"/>
    <property type="molecule type" value="Genomic_DNA"/>
</dbReference>
<dbReference type="RefSeq" id="YP_001123068.1">
    <property type="nucleotide sequence ID" value="NC_009266.1"/>
</dbReference>
<dbReference type="SMR" id="A4QJN7"/>
<dbReference type="GeneID" id="4962284"/>
<dbReference type="GO" id="GO:0009507">
    <property type="term" value="C:chloroplast"/>
    <property type="evidence" value="ECO:0007669"/>
    <property type="project" value="UniProtKB-SubCell"/>
</dbReference>
<dbReference type="GO" id="GO:0022627">
    <property type="term" value="C:cytosolic small ribosomal subunit"/>
    <property type="evidence" value="ECO:0007669"/>
    <property type="project" value="TreeGrafter"/>
</dbReference>
<dbReference type="GO" id="GO:0019843">
    <property type="term" value="F:rRNA binding"/>
    <property type="evidence" value="ECO:0007669"/>
    <property type="project" value="UniProtKB-UniRule"/>
</dbReference>
<dbReference type="GO" id="GO:0003735">
    <property type="term" value="F:structural constituent of ribosome"/>
    <property type="evidence" value="ECO:0007669"/>
    <property type="project" value="InterPro"/>
</dbReference>
<dbReference type="GO" id="GO:0006412">
    <property type="term" value="P:translation"/>
    <property type="evidence" value="ECO:0007669"/>
    <property type="project" value="UniProtKB-UniRule"/>
</dbReference>
<dbReference type="CDD" id="cd02412">
    <property type="entry name" value="KH-II_30S_S3"/>
    <property type="match status" value="1"/>
</dbReference>
<dbReference type="FunFam" id="3.30.1140.32:FF:000003">
    <property type="entry name" value="30S ribosomal protein S3, chloroplastic"/>
    <property type="match status" value="1"/>
</dbReference>
<dbReference type="FunFam" id="3.30.300.20:FF:000008">
    <property type="entry name" value="30S ribosomal protein S3, chloroplastic"/>
    <property type="match status" value="1"/>
</dbReference>
<dbReference type="Gene3D" id="3.30.300.20">
    <property type="match status" value="1"/>
</dbReference>
<dbReference type="Gene3D" id="3.30.1140.32">
    <property type="entry name" value="Ribosomal protein S3, C-terminal domain"/>
    <property type="match status" value="1"/>
</dbReference>
<dbReference type="HAMAP" id="MF_01309_B">
    <property type="entry name" value="Ribosomal_uS3_B"/>
    <property type="match status" value="1"/>
</dbReference>
<dbReference type="InterPro" id="IPR015946">
    <property type="entry name" value="KH_dom-like_a/b"/>
</dbReference>
<dbReference type="InterPro" id="IPR004044">
    <property type="entry name" value="KH_dom_type_2"/>
</dbReference>
<dbReference type="InterPro" id="IPR009019">
    <property type="entry name" value="KH_sf_prok-type"/>
</dbReference>
<dbReference type="InterPro" id="IPR036419">
    <property type="entry name" value="Ribosomal_S3_C_sf"/>
</dbReference>
<dbReference type="InterPro" id="IPR005704">
    <property type="entry name" value="Ribosomal_uS3_bac-typ"/>
</dbReference>
<dbReference type="InterPro" id="IPR001351">
    <property type="entry name" value="Ribosomal_uS3_C"/>
</dbReference>
<dbReference type="InterPro" id="IPR018280">
    <property type="entry name" value="Ribosomal_uS3_CS"/>
</dbReference>
<dbReference type="NCBIfam" id="TIGR01009">
    <property type="entry name" value="rpsC_bact"/>
    <property type="match status" value="1"/>
</dbReference>
<dbReference type="PANTHER" id="PTHR11760">
    <property type="entry name" value="30S/40S RIBOSOMAL PROTEIN S3"/>
    <property type="match status" value="1"/>
</dbReference>
<dbReference type="PANTHER" id="PTHR11760:SF19">
    <property type="entry name" value="SMALL RIBOSOMAL SUBUNIT PROTEIN US3C"/>
    <property type="match status" value="1"/>
</dbReference>
<dbReference type="Pfam" id="PF00189">
    <property type="entry name" value="Ribosomal_S3_C"/>
    <property type="match status" value="1"/>
</dbReference>
<dbReference type="SUPFAM" id="SSF54814">
    <property type="entry name" value="Prokaryotic type KH domain (KH-domain type II)"/>
    <property type="match status" value="1"/>
</dbReference>
<dbReference type="SUPFAM" id="SSF54821">
    <property type="entry name" value="Ribosomal protein S3 C-terminal domain"/>
    <property type="match status" value="1"/>
</dbReference>
<dbReference type="PROSITE" id="PS50823">
    <property type="entry name" value="KH_TYPE_2"/>
    <property type="match status" value="1"/>
</dbReference>
<dbReference type="PROSITE" id="PS00548">
    <property type="entry name" value="RIBOSOMAL_S3"/>
    <property type="match status" value="1"/>
</dbReference>
<gene>
    <name type="primary">rps3</name>
</gene>
<protein>
    <recommendedName>
        <fullName evidence="2">Small ribosomal subunit protein uS3c</fullName>
    </recommendedName>
    <alternativeName>
        <fullName>30S ribosomal protein S3, chloroplastic</fullName>
    </alternativeName>
</protein>
<evidence type="ECO:0000250" key="1"/>
<evidence type="ECO:0000305" key="2"/>
<organism>
    <name type="scientific">Aethionema grandiflorum</name>
    <name type="common">Persian stone-cress</name>
    <dbReference type="NCBI Taxonomy" id="72657"/>
    <lineage>
        <taxon>Eukaryota</taxon>
        <taxon>Viridiplantae</taxon>
        <taxon>Streptophyta</taxon>
        <taxon>Embryophyta</taxon>
        <taxon>Tracheophyta</taxon>
        <taxon>Spermatophyta</taxon>
        <taxon>Magnoliopsida</taxon>
        <taxon>eudicotyledons</taxon>
        <taxon>Gunneridae</taxon>
        <taxon>Pentapetalae</taxon>
        <taxon>rosids</taxon>
        <taxon>malvids</taxon>
        <taxon>Brassicales</taxon>
        <taxon>Brassicaceae</taxon>
        <taxon>Aethionemeae</taxon>
        <taxon>Aethionema</taxon>
    </lineage>
</organism>
<feature type="chain" id="PRO_0000293935" description="Small ribosomal subunit protein uS3c">
    <location>
        <begin position="1"/>
        <end position="218"/>
    </location>
</feature>
<feature type="domain" description="KH type-2">
    <location>
        <begin position="47"/>
        <end position="118"/>
    </location>
</feature>
<sequence length="218" mass="25200">MGQKINPLGFRLGTTQSHHSLWFAQPKKYCEGLEEDKKIRDCIKNYVQKNIRISSGMEGIARIEIQKRIDLIQVIIYMGFPKLLIEDKPRRVEELQMNVQKELNCVNRKLNIAITRISTPYGHPNILAEFIAGQLKNRVSFRKAMKKAIELTEQANTKGIQVQIAGRIDGKEIARVEWIREGRVPLQTIEAKIDYCSYTVRTIYGVLGIKIWIFVDEE</sequence>
<geneLocation type="chloroplast"/>
<accession>A4QJN7</accession>
<comment type="subunit">
    <text evidence="1">Part of the 30S ribosomal subunit.</text>
</comment>
<comment type="subcellular location">
    <subcellularLocation>
        <location>Plastid</location>
        <location>Chloroplast</location>
    </subcellularLocation>
</comment>
<comment type="similarity">
    <text evidence="2">Belongs to the universal ribosomal protein uS3 family.</text>
</comment>
<name>RR3_AETGR</name>
<keyword id="KW-0150">Chloroplast</keyword>
<keyword id="KW-0934">Plastid</keyword>
<keyword id="KW-0687">Ribonucleoprotein</keyword>
<keyword id="KW-0689">Ribosomal protein</keyword>
<keyword id="KW-0694">RNA-binding</keyword>
<keyword id="KW-0699">rRNA-binding</keyword>
<proteinExistence type="inferred from homology"/>